<accession>Q57ID3</accession>
<protein>
    <recommendedName>
        <fullName evidence="1">Glycerol-3-phosphate dehydrogenase [NAD(P)+]</fullName>
        <ecNumber evidence="1">1.1.1.94</ecNumber>
    </recommendedName>
    <alternativeName>
        <fullName evidence="1">NAD(P)(+)-dependent glycerol-3-phosphate dehydrogenase</fullName>
    </alternativeName>
    <alternativeName>
        <fullName evidence="1">NAD(P)H-dependent dihydroxyacetone-phosphate reductase</fullName>
    </alternativeName>
</protein>
<keyword id="KW-0963">Cytoplasm</keyword>
<keyword id="KW-0444">Lipid biosynthesis</keyword>
<keyword id="KW-0443">Lipid metabolism</keyword>
<keyword id="KW-0520">NAD</keyword>
<keyword id="KW-0521">NADP</keyword>
<keyword id="KW-0547">Nucleotide-binding</keyword>
<keyword id="KW-0560">Oxidoreductase</keyword>
<keyword id="KW-0594">Phospholipid biosynthesis</keyword>
<keyword id="KW-1208">Phospholipid metabolism</keyword>
<proteinExistence type="inferred from homology"/>
<evidence type="ECO:0000255" key="1">
    <source>
        <dbReference type="HAMAP-Rule" id="MF_00394"/>
    </source>
</evidence>
<organism>
    <name type="scientific">Salmonella choleraesuis (strain SC-B67)</name>
    <dbReference type="NCBI Taxonomy" id="321314"/>
    <lineage>
        <taxon>Bacteria</taxon>
        <taxon>Pseudomonadati</taxon>
        <taxon>Pseudomonadota</taxon>
        <taxon>Gammaproteobacteria</taxon>
        <taxon>Enterobacterales</taxon>
        <taxon>Enterobacteriaceae</taxon>
        <taxon>Salmonella</taxon>
    </lineage>
</organism>
<sequence length="339" mass="36343">MNQSNASMTVIGAGSYGTALAITLARNGHQVVLWGHDPKHIATLEHDRCNVAFLPDVPFPDTLHLESDLATALAASRNILVVVPSHVFSDVLRQIKPLMRPDARLVWATKGLEAETGRLLQDVAREALGDQIPLAVISGPTFAKELAAGLPTAISLASTDETFADDLQQLLHCGKSFRVYINADFIGVQLGGAVKNVIAIGAGMSDGIGFGANARTALITRGLTEMSRLGAALGADPATFMGMAGLGDLVLTCTDNQSRNRRFGMMLGQGMDVKGAQDKIGQVVEGYRNTKEVRELAHRFGVEMPITEEIYQVLYCGKNAREAALTLLGRARKEELSRH</sequence>
<comment type="function">
    <text evidence="1">Catalyzes the reduction of the glycolytic intermediate dihydroxyacetone phosphate (DHAP) to sn-glycerol 3-phosphate (G3P), the key precursor for phospholipid synthesis.</text>
</comment>
<comment type="catalytic activity">
    <reaction evidence="1">
        <text>sn-glycerol 3-phosphate + NAD(+) = dihydroxyacetone phosphate + NADH + H(+)</text>
        <dbReference type="Rhea" id="RHEA:11092"/>
        <dbReference type="ChEBI" id="CHEBI:15378"/>
        <dbReference type="ChEBI" id="CHEBI:57540"/>
        <dbReference type="ChEBI" id="CHEBI:57597"/>
        <dbReference type="ChEBI" id="CHEBI:57642"/>
        <dbReference type="ChEBI" id="CHEBI:57945"/>
        <dbReference type="EC" id="1.1.1.94"/>
    </reaction>
    <physiologicalReaction direction="right-to-left" evidence="1">
        <dbReference type="Rhea" id="RHEA:11094"/>
    </physiologicalReaction>
</comment>
<comment type="catalytic activity">
    <reaction evidence="1">
        <text>sn-glycerol 3-phosphate + NADP(+) = dihydroxyacetone phosphate + NADPH + H(+)</text>
        <dbReference type="Rhea" id="RHEA:11096"/>
        <dbReference type="ChEBI" id="CHEBI:15378"/>
        <dbReference type="ChEBI" id="CHEBI:57597"/>
        <dbReference type="ChEBI" id="CHEBI:57642"/>
        <dbReference type="ChEBI" id="CHEBI:57783"/>
        <dbReference type="ChEBI" id="CHEBI:58349"/>
        <dbReference type="EC" id="1.1.1.94"/>
    </reaction>
    <physiologicalReaction direction="right-to-left" evidence="1">
        <dbReference type="Rhea" id="RHEA:11098"/>
    </physiologicalReaction>
</comment>
<comment type="pathway">
    <text evidence="1">Membrane lipid metabolism; glycerophospholipid metabolism.</text>
</comment>
<comment type="subcellular location">
    <subcellularLocation>
        <location evidence="1">Cytoplasm</location>
    </subcellularLocation>
</comment>
<comment type="similarity">
    <text evidence="1">Belongs to the NAD-dependent glycerol-3-phosphate dehydrogenase family.</text>
</comment>
<name>GPDA_SALCH</name>
<reference key="1">
    <citation type="journal article" date="2005" name="Nucleic Acids Res.">
        <title>The genome sequence of Salmonella enterica serovar Choleraesuis, a highly invasive and resistant zoonotic pathogen.</title>
        <authorList>
            <person name="Chiu C.-H."/>
            <person name="Tang P."/>
            <person name="Chu C."/>
            <person name="Hu S."/>
            <person name="Bao Q."/>
            <person name="Yu J."/>
            <person name="Chou Y.-Y."/>
            <person name="Wang H.-S."/>
            <person name="Lee Y.-S."/>
        </authorList>
    </citation>
    <scope>NUCLEOTIDE SEQUENCE [LARGE SCALE GENOMIC DNA]</scope>
    <source>
        <strain>SC-B67</strain>
    </source>
</reference>
<dbReference type="EC" id="1.1.1.94" evidence="1"/>
<dbReference type="EMBL" id="AE017220">
    <property type="protein sequence ID" value="AAX67529.1"/>
    <property type="molecule type" value="Genomic_DNA"/>
</dbReference>
<dbReference type="RefSeq" id="WP_001076596.1">
    <property type="nucleotide sequence ID" value="NC_006905.1"/>
</dbReference>
<dbReference type="SMR" id="Q57ID3"/>
<dbReference type="KEGG" id="sec:SCH_3623"/>
<dbReference type="HOGENOM" id="CLU_033449_0_2_6"/>
<dbReference type="UniPathway" id="UPA00940"/>
<dbReference type="Proteomes" id="UP000000538">
    <property type="component" value="Chromosome"/>
</dbReference>
<dbReference type="GO" id="GO:0005829">
    <property type="term" value="C:cytosol"/>
    <property type="evidence" value="ECO:0007669"/>
    <property type="project" value="TreeGrafter"/>
</dbReference>
<dbReference type="GO" id="GO:0047952">
    <property type="term" value="F:glycerol-3-phosphate dehydrogenase [NAD(P)+] activity"/>
    <property type="evidence" value="ECO:0007669"/>
    <property type="project" value="UniProtKB-UniRule"/>
</dbReference>
<dbReference type="GO" id="GO:0051287">
    <property type="term" value="F:NAD binding"/>
    <property type="evidence" value="ECO:0007669"/>
    <property type="project" value="InterPro"/>
</dbReference>
<dbReference type="GO" id="GO:0005975">
    <property type="term" value="P:carbohydrate metabolic process"/>
    <property type="evidence" value="ECO:0007669"/>
    <property type="project" value="InterPro"/>
</dbReference>
<dbReference type="GO" id="GO:0046167">
    <property type="term" value="P:glycerol-3-phosphate biosynthetic process"/>
    <property type="evidence" value="ECO:0007669"/>
    <property type="project" value="UniProtKB-UniRule"/>
</dbReference>
<dbReference type="GO" id="GO:0046168">
    <property type="term" value="P:glycerol-3-phosphate catabolic process"/>
    <property type="evidence" value="ECO:0007669"/>
    <property type="project" value="InterPro"/>
</dbReference>
<dbReference type="GO" id="GO:0046474">
    <property type="term" value="P:glycerophospholipid biosynthetic process"/>
    <property type="evidence" value="ECO:0007669"/>
    <property type="project" value="TreeGrafter"/>
</dbReference>
<dbReference type="FunFam" id="1.10.1040.10:FF:000001">
    <property type="entry name" value="Glycerol-3-phosphate dehydrogenase [NAD(P)+]"/>
    <property type="match status" value="1"/>
</dbReference>
<dbReference type="FunFam" id="3.40.50.720:FF:000019">
    <property type="entry name" value="Glycerol-3-phosphate dehydrogenase [NAD(P)+]"/>
    <property type="match status" value="1"/>
</dbReference>
<dbReference type="Gene3D" id="1.10.1040.10">
    <property type="entry name" value="N-(1-d-carboxylethyl)-l-norvaline Dehydrogenase, domain 2"/>
    <property type="match status" value="1"/>
</dbReference>
<dbReference type="Gene3D" id="3.40.50.720">
    <property type="entry name" value="NAD(P)-binding Rossmann-like Domain"/>
    <property type="match status" value="1"/>
</dbReference>
<dbReference type="HAMAP" id="MF_00394">
    <property type="entry name" value="NAD_Glyc3P_dehydrog"/>
    <property type="match status" value="1"/>
</dbReference>
<dbReference type="InterPro" id="IPR008927">
    <property type="entry name" value="6-PGluconate_DH-like_C_sf"/>
</dbReference>
<dbReference type="InterPro" id="IPR013328">
    <property type="entry name" value="6PGD_dom2"/>
</dbReference>
<dbReference type="InterPro" id="IPR006168">
    <property type="entry name" value="G3P_DH_NAD-dep"/>
</dbReference>
<dbReference type="InterPro" id="IPR006109">
    <property type="entry name" value="G3P_DH_NAD-dep_C"/>
</dbReference>
<dbReference type="InterPro" id="IPR011128">
    <property type="entry name" value="G3P_DH_NAD-dep_N"/>
</dbReference>
<dbReference type="InterPro" id="IPR036291">
    <property type="entry name" value="NAD(P)-bd_dom_sf"/>
</dbReference>
<dbReference type="NCBIfam" id="NF000939">
    <property type="entry name" value="PRK00094.1-1"/>
    <property type="match status" value="1"/>
</dbReference>
<dbReference type="NCBIfam" id="NF000940">
    <property type="entry name" value="PRK00094.1-2"/>
    <property type="match status" value="1"/>
</dbReference>
<dbReference type="NCBIfam" id="NF000942">
    <property type="entry name" value="PRK00094.1-4"/>
    <property type="match status" value="1"/>
</dbReference>
<dbReference type="PANTHER" id="PTHR11728">
    <property type="entry name" value="GLYCEROL-3-PHOSPHATE DEHYDROGENASE"/>
    <property type="match status" value="1"/>
</dbReference>
<dbReference type="PANTHER" id="PTHR11728:SF1">
    <property type="entry name" value="GLYCEROL-3-PHOSPHATE DEHYDROGENASE [NAD(+)] 2, CHLOROPLASTIC"/>
    <property type="match status" value="1"/>
</dbReference>
<dbReference type="Pfam" id="PF07479">
    <property type="entry name" value="NAD_Gly3P_dh_C"/>
    <property type="match status" value="1"/>
</dbReference>
<dbReference type="Pfam" id="PF01210">
    <property type="entry name" value="NAD_Gly3P_dh_N"/>
    <property type="match status" value="1"/>
</dbReference>
<dbReference type="PIRSF" id="PIRSF000114">
    <property type="entry name" value="Glycerol-3-P_dh"/>
    <property type="match status" value="1"/>
</dbReference>
<dbReference type="PRINTS" id="PR00077">
    <property type="entry name" value="GPDHDRGNASE"/>
</dbReference>
<dbReference type="SUPFAM" id="SSF48179">
    <property type="entry name" value="6-phosphogluconate dehydrogenase C-terminal domain-like"/>
    <property type="match status" value="1"/>
</dbReference>
<dbReference type="SUPFAM" id="SSF51735">
    <property type="entry name" value="NAD(P)-binding Rossmann-fold domains"/>
    <property type="match status" value="1"/>
</dbReference>
<dbReference type="PROSITE" id="PS00957">
    <property type="entry name" value="NAD_G3PDH"/>
    <property type="match status" value="1"/>
</dbReference>
<feature type="chain" id="PRO_0000255366" description="Glycerol-3-phosphate dehydrogenase [NAD(P)+]">
    <location>
        <begin position="1"/>
        <end position="339"/>
    </location>
</feature>
<feature type="active site" description="Proton acceptor" evidence="1">
    <location>
        <position position="195"/>
    </location>
</feature>
<feature type="binding site" evidence="1">
    <location>
        <position position="15"/>
    </location>
    <ligand>
        <name>NADPH</name>
        <dbReference type="ChEBI" id="CHEBI:57783"/>
    </ligand>
</feature>
<feature type="binding site" evidence="1">
    <location>
        <position position="16"/>
    </location>
    <ligand>
        <name>NADPH</name>
        <dbReference type="ChEBI" id="CHEBI:57783"/>
    </ligand>
</feature>
<feature type="binding site" evidence="1">
    <location>
        <position position="36"/>
    </location>
    <ligand>
        <name>NADPH</name>
        <dbReference type="ChEBI" id="CHEBI:57783"/>
    </ligand>
</feature>
<feature type="binding site" evidence="1">
    <location>
        <position position="110"/>
    </location>
    <ligand>
        <name>NADPH</name>
        <dbReference type="ChEBI" id="CHEBI:57783"/>
    </ligand>
</feature>
<feature type="binding site" evidence="1">
    <location>
        <position position="110"/>
    </location>
    <ligand>
        <name>sn-glycerol 3-phosphate</name>
        <dbReference type="ChEBI" id="CHEBI:57597"/>
    </ligand>
</feature>
<feature type="binding site" evidence="1">
    <location>
        <position position="139"/>
    </location>
    <ligand>
        <name>sn-glycerol 3-phosphate</name>
        <dbReference type="ChEBI" id="CHEBI:57597"/>
    </ligand>
</feature>
<feature type="binding site" evidence="1">
    <location>
        <position position="141"/>
    </location>
    <ligand>
        <name>sn-glycerol 3-phosphate</name>
        <dbReference type="ChEBI" id="CHEBI:57597"/>
    </ligand>
</feature>
<feature type="binding site" evidence="1">
    <location>
        <position position="143"/>
    </location>
    <ligand>
        <name>NADPH</name>
        <dbReference type="ChEBI" id="CHEBI:57783"/>
    </ligand>
</feature>
<feature type="binding site" evidence="1">
    <location>
        <position position="195"/>
    </location>
    <ligand>
        <name>sn-glycerol 3-phosphate</name>
        <dbReference type="ChEBI" id="CHEBI:57597"/>
    </ligand>
</feature>
<feature type="binding site" evidence="1">
    <location>
        <position position="248"/>
    </location>
    <ligand>
        <name>sn-glycerol 3-phosphate</name>
        <dbReference type="ChEBI" id="CHEBI:57597"/>
    </ligand>
</feature>
<feature type="binding site" evidence="1">
    <location>
        <position position="258"/>
    </location>
    <ligand>
        <name>sn-glycerol 3-phosphate</name>
        <dbReference type="ChEBI" id="CHEBI:57597"/>
    </ligand>
</feature>
<feature type="binding site" evidence="1">
    <location>
        <position position="259"/>
    </location>
    <ligand>
        <name>NADPH</name>
        <dbReference type="ChEBI" id="CHEBI:57783"/>
    </ligand>
</feature>
<feature type="binding site" evidence="1">
    <location>
        <position position="259"/>
    </location>
    <ligand>
        <name>sn-glycerol 3-phosphate</name>
        <dbReference type="ChEBI" id="CHEBI:57597"/>
    </ligand>
</feature>
<feature type="binding site" evidence="1">
    <location>
        <position position="260"/>
    </location>
    <ligand>
        <name>sn-glycerol 3-phosphate</name>
        <dbReference type="ChEBI" id="CHEBI:57597"/>
    </ligand>
</feature>
<feature type="binding site" evidence="1">
    <location>
        <position position="283"/>
    </location>
    <ligand>
        <name>NADPH</name>
        <dbReference type="ChEBI" id="CHEBI:57783"/>
    </ligand>
</feature>
<feature type="binding site" evidence="1">
    <location>
        <position position="285"/>
    </location>
    <ligand>
        <name>NADPH</name>
        <dbReference type="ChEBI" id="CHEBI:57783"/>
    </ligand>
</feature>
<gene>
    <name evidence="1" type="primary">gpsA</name>
    <name type="ordered locus">SCH_3623</name>
</gene>